<feature type="chain" id="PRO_0000190258" description="5,10-methylenetetrahydrofolate reductase">
    <location>
        <begin position="1"/>
        <end position="292"/>
    </location>
</feature>
<feature type="active site" description="Proton donor/acceptor" evidence="1">
    <location>
        <position position="28"/>
    </location>
</feature>
<feature type="binding site" evidence="1">
    <location>
        <position position="59"/>
    </location>
    <ligand>
        <name>NADH</name>
        <dbReference type="ChEBI" id="CHEBI:57945"/>
    </ligand>
</feature>
<feature type="binding site" evidence="1">
    <location>
        <position position="60"/>
    </location>
    <ligand>
        <name>FAD</name>
        <dbReference type="ChEBI" id="CHEBI:57692"/>
    </ligand>
</feature>
<feature type="binding site" evidence="1">
    <location>
        <position position="62"/>
    </location>
    <ligand>
        <name>FAD</name>
        <dbReference type="ChEBI" id="CHEBI:57692"/>
    </ligand>
</feature>
<feature type="binding site" evidence="1">
    <location>
        <position position="88"/>
    </location>
    <ligand>
        <name>FAD</name>
        <dbReference type="ChEBI" id="CHEBI:57692"/>
    </ligand>
</feature>
<feature type="binding site" evidence="1">
    <location>
        <position position="118"/>
    </location>
    <ligand>
        <name>FAD</name>
        <dbReference type="ChEBI" id="CHEBI:57692"/>
    </ligand>
</feature>
<feature type="binding site" evidence="1">
    <location>
        <position position="119"/>
    </location>
    <ligand>
        <name>FAD</name>
        <dbReference type="ChEBI" id="CHEBI:57692"/>
    </ligand>
</feature>
<feature type="binding site" evidence="1">
    <location>
        <position position="120"/>
    </location>
    <ligand>
        <name>(6S)-5-methyl-5,6,7,8-tetrahydrofolate</name>
        <dbReference type="ChEBI" id="CHEBI:18608"/>
    </ligand>
</feature>
<feature type="binding site" evidence="1">
    <location>
        <position position="120"/>
    </location>
    <ligand>
        <name>FAD</name>
        <dbReference type="ChEBI" id="CHEBI:57692"/>
    </ligand>
</feature>
<feature type="binding site" evidence="1">
    <location>
        <position position="132"/>
    </location>
    <ligand>
        <name>FAD</name>
        <dbReference type="ChEBI" id="CHEBI:57692"/>
    </ligand>
</feature>
<feature type="binding site" evidence="1">
    <location>
        <position position="152"/>
    </location>
    <ligand>
        <name>FAD</name>
        <dbReference type="ChEBI" id="CHEBI:57692"/>
    </ligand>
</feature>
<feature type="binding site" evidence="1">
    <location>
        <position position="156"/>
    </location>
    <ligand>
        <name>FAD</name>
        <dbReference type="ChEBI" id="CHEBI:57692"/>
    </ligand>
</feature>
<feature type="binding site" evidence="1">
    <location>
        <position position="165"/>
    </location>
    <ligand>
        <name>FAD</name>
        <dbReference type="ChEBI" id="CHEBI:57692"/>
    </ligand>
</feature>
<feature type="binding site" evidence="1">
    <location>
        <position position="168"/>
    </location>
    <ligand>
        <name>FAD</name>
        <dbReference type="ChEBI" id="CHEBI:57692"/>
    </ligand>
</feature>
<feature type="binding site" evidence="1">
    <location>
        <position position="171"/>
    </location>
    <ligand>
        <name>FAD</name>
        <dbReference type="ChEBI" id="CHEBI:57692"/>
    </ligand>
</feature>
<feature type="binding site" evidence="1">
    <location>
        <position position="172"/>
    </location>
    <ligand>
        <name>FAD</name>
        <dbReference type="ChEBI" id="CHEBI:57692"/>
    </ligand>
</feature>
<feature type="binding site" evidence="1">
    <location>
        <position position="183"/>
    </location>
    <ligand>
        <name>(6S)-5-methyl-5,6,7,8-tetrahydrofolate</name>
        <dbReference type="ChEBI" id="CHEBI:18608"/>
    </ligand>
</feature>
<feature type="binding site" evidence="1">
    <location>
        <position position="183"/>
    </location>
    <ligand>
        <name>NADH</name>
        <dbReference type="ChEBI" id="CHEBI:57945"/>
    </ligand>
</feature>
<reference key="1">
    <citation type="journal article" date="2000" name="Nature">
        <title>Genome sequence of the endocellular bacterial symbiont of aphids Buchnera sp. APS.</title>
        <authorList>
            <person name="Shigenobu S."/>
            <person name="Watanabe H."/>
            <person name="Hattori M."/>
            <person name="Sakaki Y."/>
            <person name="Ishikawa H."/>
        </authorList>
    </citation>
    <scope>NUCLEOTIDE SEQUENCE [LARGE SCALE GENOMIC DNA]</scope>
    <source>
        <strain>APS</strain>
    </source>
</reference>
<gene>
    <name type="primary">metF</name>
    <name type="ordered locus">BU046</name>
</gene>
<comment type="function">
    <text evidence="1">Catalyzes the NADH-dependent reduction of 5,10-methylenetetrahydrofolate to 5-methyltetrahydrofolate. Is required to provide the methyl group necessary for methionine synthetase to convert homocysteine to methionine; the methyl group is given by 5-methyltetrahydrofolate.</text>
</comment>
<comment type="catalytic activity">
    <reaction evidence="1">
        <text>(6S)-5-methyl-5,6,7,8-tetrahydrofolate + NAD(+) = (6R)-5,10-methylene-5,6,7,8-tetrahydrofolate + NADH + H(+)</text>
        <dbReference type="Rhea" id="RHEA:19821"/>
        <dbReference type="ChEBI" id="CHEBI:15378"/>
        <dbReference type="ChEBI" id="CHEBI:15636"/>
        <dbReference type="ChEBI" id="CHEBI:18608"/>
        <dbReference type="ChEBI" id="CHEBI:57540"/>
        <dbReference type="ChEBI" id="CHEBI:57945"/>
        <dbReference type="EC" id="1.5.1.54"/>
    </reaction>
    <physiologicalReaction direction="right-to-left" evidence="1">
        <dbReference type="Rhea" id="RHEA:19823"/>
    </physiologicalReaction>
</comment>
<comment type="cofactor">
    <cofactor evidence="1">
        <name>FAD</name>
        <dbReference type="ChEBI" id="CHEBI:57692"/>
    </cofactor>
</comment>
<comment type="pathway">
    <text>One-carbon metabolism; tetrahydrofolate interconversion.</text>
</comment>
<comment type="pathway">
    <text evidence="1">Amino-acid biosynthesis; L-methionine biosynthesis via de novo pathway.</text>
</comment>
<comment type="similarity">
    <text evidence="2">Belongs to the methylenetetrahydrofolate reductase family.</text>
</comment>
<organism>
    <name type="scientific">Buchnera aphidicola subsp. Acyrthosiphon pisum (strain APS)</name>
    <name type="common">Acyrthosiphon pisum symbiotic bacterium</name>
    <dbReference type="NCBI Taxonomy" id="107806"/>
    <lineage>
        <taxon>Bacteria</taxon>
        <taxon>Pseudomonadati</taxon>
        <taxon>Pseudomonadota</taxon>
        <taxon>Gammaproteobacteria</taxon>
        <taxon>Enterobacterales</taxon>
        <taxon>Erwiniaceae</taxon>
        <taxon>Buchnera</taxon>
    </lineage>
</organism>
<proteinExistence type="inferred from homology"/>
<name>METF_BUCAI</name>
<protein>
    <recommendedName>
        <fullName>5,10-methylenetetrahydrofolate reductase</fullName>
        <ecNumber evidence="1">1.5.1.54</ecNumber>
    </recommendedName>
</protein>
<accession>P57154</accession>
<sequence length="292" mass="33730">MKNYSQYHQDIMNQKLENIRNNIQCSFEFFPPKNSFLEENLWSTVNRLSLLKPKFFSVTYGANTGEREKTYDTVQKIYKKTGIITAAHLTCIDSTPHKLKEIAYNYWNSGIKSIVALRGDTLEKDYRHTMYAVDLVLLLKKIADFDISVAAYPELHPESKNVKSDILNLKKKVDAGASRAITQFFFNIESYLRFRDNCIKNKINIDIIPGILPVCNFQKLKRFSSMTNVKIPKWMLDMFNGLDDDIFTQKIIGSSIAIDMVKKLSCEGVKNFHFYTLNQSDITYSICHILGL</sequence>
<evidence type="ECO:0000250" key="1">
    <source>
        <dbReference type="UniProtKB" id="P0AEZ1"/>
    </source>
</evidence>
<evidence type="ECO:0000305" key="2"/>
<keyword id="KW-0028">Amino-acid biosynthesis</keyword>
<keyword id="KW-0274">FAD</keyword>
<keyword id="KW-0285">Flavoprotein</keyword>
<keyword id="KW-0486">Methionine biosynthesis</keyword>
<keyword id="KW-0520">NAD</keyword>
<keyword id="KW-0560">Oxidoreductase</keyword>
<keyword id="KW-1185">Reference proteome</keyword>
<dbReference type="EC" id="1.5.1.54" evidence="1"/>
<dbReference type="EMBL" id="BA000003">
    <property type="protein sequence ID" value="BAB12769.1"/>
    <property type="molecule type" value="Genomic_DNA"/>
</dbReference>
<dbReference type="RefSeq" id="NP_239883.1">
    <property type="nucleotide sequence ID" value="NC_002528.1"/>
</dbReference>
<dbReference type="RefSeq" id="WP_010895916.1">
    <property type="nucleotide sequence ID" value="NC_002528.1"/>
</dbReference>
<dbReference type="SMR" id="P57154"/>
<dbReference type="STRING" id="563178.BUAP5A_045"/>
<dbReference type="EnsemblBacteria" id="BAB12769">
    <property type="protein sequence ID" value="BAB12769"/>
    <property type="gene ID" value="BAB12769"/>
</dbReference>
<dbReference type="KEGG" id="buc:BU046"/>
<dbReference type="PATRIC" id="fig|107806.10.peg.55"/>
<dbReference type="eggNOG" id="COG0685">
    <property type="taxonomic scope" value="Bacteria"/>
</dbReference>
<dbReference type="HOGENOM" id="CLU_025841_0_0_6"/>
<dbReference type="UniPathway" id="UPA00051"/>
<dbReference type="UniPathway" id="UPA00193"/>
<dbReference type="Proteomes" id="UP000001806">
    <property type="component" value="Chromosome"/>
</dbReference>
<dbReference type="GO" id="GO:0005829">
    <property type="term" value="C:cytosol"/>
    <property type="evidence" value="ECO:0007669"/>
    <property type="project" value="InterPro"/>
</dbReference>
<dbReference type="GO" id="GO:0071949">
    <property type="term" value="F:FAD binding"/>
    <property type="evidence" value="ECO:0007669"/>
    <property type="project" value="TreeGrafter"/>
</dbReference>
<dbReference type="GO" id="GO:0106312">
    <property type="term" value="F:methylenetetrahydrofolate reductase (NADH) activity"/>
    <property type="evidence" value="ECO:0007669"/>
    <property type="project" value="RHEA"/>
</dbReference>
<dbReference type="GO" id="GO:0009086">
    <property type="term" value="P:methionine biosynthetic process"/>
    <property type="evidence" value="ECO:0007669"/>
    <property type="project" value="UniProtKB-KW"/>
</dbReference>
<dbReference type="GO" id="GO:0035999">
    <property type="term" value="P:tetrahydrofolate interconversion"/>
    <property type="evidence" value="ECO:0007669"/>
    <property type="project" value="UniProtKB-UniPathway"/>
</dbReference>
<dbReference type="CDD" id="cd00537">
    <property type="entry name" value="MTHFR"/>
    <property type="match status" value="1"/>
</dbReference>
<dbReference type="FunFam" id="3.20.20.220:FF:000001">
    <property type="entry name" value="Methylenetetrahydrofolate reductase"/>
    <property type="match status" value="1"/>
</dbReference>
<dbReference type="Gene3D" id="3.20.20.220">
    <property type="match status" value="1"/>
</dbReference>
<dbReference type="InterPro" id="IPR029041">
    <property type="entry name" value="FAD-linked_oxidoreductase-like"/>
</dbReference>
<dbReference type="InterPro" id="IPR003171">
    <property type="entry name" value="Mehydrof_redctse-like"/>
</dbReference>
<dbReference type="InterPro" id="IPR004620">
    <property type="entry name" value="MTHF_reductase_bac"/>
</dbReference>
<dbReference type="NCBIfam" id="TIGR00676">
    <property type="entry name" value="fadh2"/>
    <property type="match status" value="1"/>
</dbReference>
<dbReference type="NCBIfam" id="NF006950">
    <property type="entry name" value="PRK09432.1"/>
    <property type="match status" value="1"/>
</dbReference>
<dbReference type="PANTHER" id="PTHR45754">
    <property type="entry name" value="METHYLENETETRAHYDROFOLATE REDUCTASE"/>
    <property type="match status" value="1"/>
</dbReference>
<dbReference type="PANTHER" id="PTHR45754:SF3">
    <property type="entry name" value="METHYLENETETRAHYDROFOLATE REDUCTASE (NADPH)"/>
    <property type="match status" value="1"/>
</dbReference>
<dbReference type="Pfam" id="PF02219">
    <property type="entry name" value="MTHFR"/>
    <property type="match status" value="1"/>
</dbReference>
<dbReference type="SUPFAM" id="SSF51730">
    <property type="entry name" value="FAD-linked oxidoreductase"/>
    <property type="match status" value="1"/>
</dbReference>